<name>PHNY_GIMM8</name>
<gene>
    <name evidence="4" type="primary">phnY*</name>
    <name evidence="6" type="ORF">PM8797T_07609</name>
</gene>
<feature type="chain" id="PRO_0000457715" description="Methylphosphonate hydroxylase">
    <location>
        <begin position="1"/>
        <end position="260"/>
    </location>
</feature>
<feature type="binding site" evidence="1">
    <location>
        <position position="107"/>
    </location>
    <ligand>
        <name>2-oxoglutarate</name>
        <dbReference type="ChEBI" id="CHEBI:16810"/>
    </ligand>
</feature>
<feature type="binding site" evidence="2">
    <location>
        <position position="117"/>
    </location>
    <ligand>
        <name>Fe cation</name>
        <dbReference type="ChEBI" id="CHEBI:24875"/>
    </ligand>
</feature>
<feature type="binding site" evidence="2">
    <location>
        <position position="119"/>
    </location>
    <ligand>
        <name>Fe cation</name>
        <dbReference type="ChEBI" id="CHEBI:24875"/>
    </ligand>
</feature>
<feature type="binding site" evidence="2">
    <location>
        <position position="195"/>
    </location>
    <ligand>
        <name>Fe cation</name>
        <dbReference type="ChEBI" id="CHEBI:24875"/>
    </ligand>
</feature>
<accession>P0DX11</accession>
<dbReference type="EC" id="1.14.11.71" evidence="3"/>
<dbReference type="EMBL" id="ABCE01000018">
    <property type="protein sequence ID" value="EDL59072.1"/>
    <property type="molecule type" value="Genomic_DNA"/>
</dbReference>
<dbReference type="RefSeq" id="WP_002646828.1">
    <property type="nucleotide sequence ID" value="NZ_ABCE01000018.1"/>
</dbReference>
<dbReference type="SMR" id="P0DX11"/>
<dbReference type="GeneID" id="98645009"/>
<dbReference type="OrthoDB" id="9796766at2"/>
<dbReference type="GO" id="GO:0016706">
    <property type="term" value="F:2-oxoglutarate-dependent dioxygenase activity"/>
    <property type="evidence" value="ECO:0007669"/>
    <property type="project" value="UniProtKB-ARBA"/>
</dbReference>
<dbReference type="GO" id="GO:0005506">
    <property type="term" value="F:iron ion binding"/>
    <property type="evidence" value="ECO:0007669"/>
    <property type="project" value="UniProtKB-ARBA"/>
</dbReference>
<dbReference type="Gene3D" id="2.60.120.620">
    <property type="entry name" value="q2cbj1_9rhob like domain"/>
    <property type="match status" value="1"/>
</dbReference>
<dbReference type="InterPro" id="IPR008775">
    <property type="entry name" value="Phytyl_CoA_dOase-like"/>
</dbReference>
<dbReference type="PANTHER" id="PTHR20883:SF48">
    <property type="entry name" value="ECTOINE DIOXYGENASE"/>
    <property type="match status" value="1"/>
</dbReference>
<dbReference type="PANTHER" id="PTHR20883">
    <property type="entry name" value="PHYTANOYL-COA DIOXYGENASE DOMAIN CONTAINING 1"/>
    <property type="match status" value="1"/>
</dbReference>
<dbReference type="Pfam" id="PF05721">
    <property type="entry name" value="PhyH"/>
    <property type="match status" value="1"/>
</dbReference>
<dbReference type="SUPFAM" id="SSF51197">
    <property type="entry name" value="Clavaminate synthase-like"/>
    <property type="match status" value="1"/>
</dbReference>
<organism>
    <name type="scientific">Gimesia maris (strain ATCC 29201 / DSM 8797 / 534-30)</name>
    <name type="common">Planctomyces maris</name>
    <dbReference type="NCBI Taxonomy" id="344747"/>
    <lineage>
        <taxon>Bacteria</taxon>
        <taxon>Pseudomonadati</taxon>
        <taxon>Planctomycetota</taxon>
        <taxon>Planctomycetia</taxon>
        <taxon>Planctomycetales</taxon>
        <taxon>Planctomycetaceae</taxon>
        <taxon>Gimesia</taxon>
    </lineage>
</organism>
<proteinExistence type="evidence at protein level"/>
<protein>
    <recommendedName>
        <fullName evidence="5">Methylphosphonate hydroxylase</fullName>
        <ecNumber evidence="3">1.14.11.71</ecNumber>
    </recommendedName>
    <alternativeName>
        <fullName evidence="4">GmPhnY*</fullName>
    </alternativeName>
</protein>
<evidence type="ECO:0000250" key="1">
    <source>
        <dbReference type="UniProtKB" id="Q1GNW5"/>
    </source>
</evidence>
<evidence type="ECO:0000250" key="2">
    <source>
        <dbReference type="UniProtKB" id="Q2TDY4"/>
    </source>
</evidence>
<evidence type="ECO:0000269" key="3">
    <source>
    </source>
</evidence>
<evidence type="ECO:0000303" key="4">
    <source>
    </source>
</evidence>
<evidence type="ECO:0000305" key="5"/>
<evidence type="ECO:0000312" key="6">
    <source>
        <dbReference type="EMBL" id="EDL59072.1"/>
    </source>
</evidence>
<reference key="1">
    <citation type="submission" date="2007-06" db="EMBL/GenBank/DDBJ databases">
        <authorList>
            <person name="Amann R."/>
            <person name="Ferriera S."/>
            <person name="Johnson J."/>
            <person name="Kravitz S."/>
            <person name="Beeson K."/>
            <person name="Sutton G."/>
            <person name="Rogers Y.-H."/>
            <person name="Friedman R."/>
            <person name="Frazier M."/>
            <person name="Venter J.C."/>
        </authorList>
    </citation>
    <scope>NUCLEOTIDE SEQUENCE [LARGE SCALE GENOMIC DNA]</scope>
    <source>
        <strain>ATCC 29201 / DSM 8797 / 534-30</strain>
    </source>
</reference>
<reference key="2">
    <citation type="journal article" date="2019" name="ACS Chem. Biol.">
        <title>An oxidative pathway for microbial utilization of methylphosphonic acid as a phosphate source.</title>
        <authorList>
            <person name="Gama S.R."/>
            <person name="Vogt M."/>
            <person name="Kalina T."/>
            <person name="Hupp K."/>
            <person name="Hammerschmidt F."/>
            <person name="Pallitsch K."/>
            <person name="Zechel D.L."/>
        </authorList>
    </citation>
    <scope>FUNCTION</scope>
    <scope>CATALYTIC ACTIVITY</scope>
    <scope>COFACTOR</scope>
    <scope>BIOPHYSICOCHEMICAL PROPERTIES</scope>
    <source>
        <strain>ATCC 29201 / DSM 8797 / 534-30</strain>
    </source>
</reference>
<comment type="function">
    <text evidence="3">Part of an oxidative pathway for utilization of methylphosphonic acid as a phosphate source (PubMed:30810303). Catalyzes the conversion of methylphosphonic acid to hydroxymethylphosphonic acid (PubMed:30810303). Is specific for the hydroxylation of methylphosphonate (PubMed:30810303).</text>
</comment>
<comment type="catalytic activity">
    <reaction evidence="3">
        <text>methylphosphonate + 2-oxoglutarate + O2 = hydroxymethylphosphonate + succinate + CO2</text>
        <dbReference type="Rhea" id="RHEA:60116"/>
        <dbReference type="ChEBI" id="CHEBI:15379"/>
        <dbReference type="ChEBI" id="CHEBI:16526"/>
        <dbReference type="ChEBI" id="CHEBI:16810"/>
        <dbReference type="ChEBI" id="CHEBI:30031"/>
        <dbReference type="ChEBI" id="CHEBI:68684"/>
        <dbReference type="ChEBI" id="CHEBI:71199"/>
        <dbReference type="EC" id="1.14.11.71"/>
    </reaction>
    <physiologicalReaction direction="left-to-right" evidence="3">
        <dbReference type="Rhea" id="RHEA:60117"/>
    </physiologicalReaction>
</comment>
<comment type="cofactor">
    <cofactor evidence="3">
        <name>Fe(2+)</name>
        <dbReference type="ChEBI" id="CHEBI:29033"/>
    </cofactor>
    <text evidence="2">Binds 1 Fe(2+) ion.</text>
</comment>
<comment type="biophysicochemical properties">
    <kinetics>
        <KM evidence="3">1500 uM for methylphosphonate</KM>
        <KM evidence="3">11 uM for 2-oxoglutarate</KM>
        <KM evidence="3">4 uM for Fe(2+)</KM>
        <text evidence="3">kcat is 0.36 sec(-1) with methylphosphonate as substrate. kcat is 0.42 sec(-1) with 2-oxoglutarate as substrate.</text>
    </kinetics>
</comment>
<comment type="similarity">
    <text evidence="5">Belongs to the PhyH family.</text>
</comment>
<sequence length="260" mass="29469">MNTTLTDSQLDRWNQTGYIKLPEFLSEAETQNLREWVEEISAWPADDEKWMHHFEQTPSGVRPARTEYILAFHAGIRQLLTQGKIPDCAGALMGEPAILYKEKINYKYPGGGGYAAHQDAPAYEFIRNHITCSIAVDAATPENGCLFFTPELHQRGLLHLDKNGCIDREYADTLDWEPVPMQPGDALFFSSYAPHKSPPNETQQPRRTLYLTYNALAEGDLREEYYADKRRSFAQVDTTGGEKLKISKIGHFDGKPAQQT</sequence>
<keyword id="KW-0223">Dioxygenase</keyword>
<keyword id="KW-0408">Iron</keyword>
<keyword id="KW-0479">Metal-binding</keyword>
<keyword id="KW-0560">Oxidoreductase</keyword>